<evidence type="ECO:0000250" key="1"/>
<evidence type="ECO:0000255" key="2">
    <source>
        <dbReference type="PROSITE-ProRule" id="PRU00674"/>
    </source>
</evidence>
<evidence type="ECO:0000305" key="3"/>
<keyword id="KW-1015">Disulfide bond</keyword>
<keyword id="KW-1185">Reference proteome</keyword>
<keyword id="KW-0964">Secreted</keyword>
<keyword id="KW-0732">Signal</keyword>
<dbReference type="EMBL" id="AK136682">
    <property type="protein sequence ID" value="BAE23098.1"/>
    <property type="molecule type" value="mRNA"/>
</dbReference>
<dbReference type="EMBL" id="CT009661">
    <property type="status" value="NOT_ANNOTATED_CDS"/>
    <property type="molecule type" value="Genomic_DNA"/>
</dbReference>
<dbReference type="EMBL" id="BC147116">
    <property type="protein sequence ID" value="AAI47117.1"/>
    <property type="molecule type" value="mRNA"/>
</dbReference>
<dbReference type="EMBL" id="BC147117">
    <property type="protein sequence ID" value="AAI47118.1"/>
    <property type="molecule type" value="mRNA"/>
</dbReference>
<dbReference type="CCDS" id="CCDS50047.1"/>
<dbReference type="RefSeq" id="NP_001030043.1">
    <property type="nucleotide sequence ID" value="NM_001034871.2"/>
</dbReference>
<dbReference type="SMR" id="Q3UW21"/>
<dbReference type="FunCoup" id="Q3UW21">
    <property type="interactions" value="1"/>
</dbReference>
<dbReference type="STRING" id="10090.ENSMUSP00000025061"/>
<dbReference type="PhosphoSitePlus" id="Q3UW21"/>
<dbReference type="PaxDb" id="10090-ENSMUSP00000025061"/>
<dbReference type="ProteomicsDB" id="283491"/>
<dbReference type="Antibodypedia" id="64892">
    <property type="antibodies" value="2 antibodies from 2 providers"/>
</dbReference>
<dbReference type="Ensembl" id="ENSMUST00000025061.6">
    <property type="protein sequence ID" value="ENSMUSP00000025061.5"/>
    <property type="gene ID" value="ENSMUSG00000024224.6"/>
</dbReference>
<dbReference type="GeneID" id="328788"/>
<dbReference type="KEGG" id="mmu:328788"/>
<dbReference type="UCSC" id="uc008bre.1">
    <property type="organism name" value="mouse"/>
</dbReference>
<dbReference type="AGR" id="MGI:2685595"/>
<dbReference type="CTD" id="389383"/>
<dbReference type="MGI" id="MGI:2685595">
    <property type="gene designation" value="Clpsl2"/>
</dbReference>
<dbReference type="VEuPathDB" id="HostDB:ENSMUSG00000024224"/>
<dbReference type="eggNOG" id="ENOG502TFBF">
    <property type="taxonomic scope" value="Eukaryota"/>
</dbReference>
<dbReference type="GeneTree" id="ENSGT00390000011494"/>
<dbReference type="HOGENOM" id="CLU_183899_0_0_1"/>
<dbReference type="InParanoid" id="Q3UW21"/>
<dbReference type="OMA" id="SDCCLMD"/>
<dbReference type="OrthoDB" id="9834137at2759"/>
<dbReference type="PhylomeDB" id="Q3UW21"/>
<dbReference type="TreeFam" id="TF343049"/>
<dbReference type="BioGRID-ORCS" id="328788">
    <property type="hits" value="3 hits in 78 CRISPR screens"/>
</dbReference>
<dbReference type="PRO" id="PR:Q3UW21"/>
<dbReference type="Proteomes" id="UP000000589">
    <property type="component" value="Chromosome 17"/>
</dbReference>
<dbReference type="RNAct" id="Q3UW21">
    <property type="molecule type" value="protein"/>
</dbReference>
<dbReference type="Bgee" id="ENSMUSG00000024224">
    <property type="expression patterns" value="Expressed in blastoderm cell in morula and 4 other cell types or tissues"/>
</dbReference>
<dbReference type="GO" id="GO:0005576">
    <property type="term" value="C:extracellular region"/>
    <property type="evidence" value="ECO:0007669"/>
    <property type="project" value="UniProtKB-SubCell"/>
</dbReference>
<dbReference type="GO" id="GO:0008047">
    <property type="term" value="F:enzyme activator activity"/>
    <property type="evidence" value="ECO:0007669"/>
    <property type="project" value="InterPro"/>
</dbReference>
<dbReference type="GO" id="GO:0007586">
    <property type="term" value="P:digestion"/>
    <property type="evidence" value="ECO:0007669"/>
    <property type="project" value="InterPro"/>
</dbReference>
<dbReference type="GO" id="GO:0016042">
    <property type="term" value="P:lipid catabolic process"/>
    <property type="evidence" value="ECO:0007669"/>
    <property type="project" value="InterPro"/>
</dbReference>
<dbReference type="FunFam" id="2.10.80.10:FF:000006">
    <property type="entry name" value="Colipase-like protein 2"/>
    <property type="match status" value="1"/>
</dbReference>
<dbReference type="Gene3D" id="2.10.80.10">
    <property type="entry name" value="Lipase, subunit A"/>
    <property type="match status" value="1"/>
</dbReference>
<dbReference type="InterPro" id="IPR001981">
    <property type="entry name" value="Colipase"/>
</dbReference>
<dbReference type="PANTHER" id="PTHR10041">
    <property type="entry name" value="COLIPASE"/>
    <property type="match status" value="1"/>
</dbReference>
<dbReference type="PANTHER" id="PTHR10041:SF3">
    <property type="entry name" value="COLIPASE-LIKE PROTEIN 2"/>
    <property type="match status" value="1"/>
</dbReference>
<dbReference type="PROSITE" id="PS51342">
    <property type="entry name" value="COLIPASE_2"/>
    <property type="match status" value="1"/>
</dbReference>
<sequence length="102" mass="11027">MAFTQALVTVLALLAGTLPHRHSENSPPKKANGDKCVHHTQCSSDCCLIDLERSGAFCTPKSRIGMGCLPQTKGSLNIMCPCRSGLNCHSKDPTCPRRCQMI</sequence>
<feature type="signal peptide" evidence="1">
    <location>
        <begin position="1"/>
        <end position="23"/>
    </location>
</feature>
<feature type="chain" id="PRO_0000352880" description="Colipase-like protein 2">
    <location>
        <begin position="24"/>
        <end position="102"/>
    </location>
</feature>
<feature type="disulfide bond" evidence="2">
    <location>
        <begin position="36"/>
        <end position="47"/>
    </location>
</feature>
<feature type="disulfide bond" evidence="2">
    <location>
        <begin position="42"/>
        <end position="58"/>
    </location>
</feature>
<feature type="disulfide bond" evidence="2">
    <location>
        <begin position="46"/>
        <end position="80"/>
    </location>
</feature>
<feature type="disulfide bond" evidence="2">
    <location>
        <begin position="68"/>
        <end position="88"/>
    </location>
</feature>
<feature type="disulfide bond" evidence="2">
    <location>
        <begin position="82"/>
        <end position="99"/>
    </location>
</feature>
<reference key="1">
    <citation type="journal article" date="2005" name="Science">
        <title>The transcriptional landscape of the mammalian genome.</title>
        <authorList>
            <person name="Carninci P."/>
            <person name="Kasukawa T."/>
            <person name="Katayama S."/>
            <person name="Gough J."/>
            <person name="Frith M.C."/>
            <person name="Maeda N."/>
            <person name="Oyama R."/>
            <person name="Ravasi T."/>
            <person name="Lenhard B."/>
            <person name="Wells C."/>
            <person name="Kodzius R."/>
            <person name="Shimokawa K."/>
            <person name="Bajic V.B."/>
            <person name="Brenner S.E."/>
            <person name="Batalov S."/>
            <person name="Forrest A.R."/>
            <person name="Zavolan M."/>
            <person name="Davis M.J."/>
            <person name="Wilming L.G."/>
            <person name="Aidinis V."/>
            <person name="Allen J.E."/>
            <person name="Ambesi-Impiombato A."/>
            <person name="Apweiler R."/>
            <person name="Aturaliya R.N."/>
            <person name="Bailey T.L."/>
            <person name="Bansal M."/>
            <person name="Baxter L."/>
            <person name="Beisel K.W."/>
            <person name="Bersano T."/>
            <person name="Bono H."/>
            <person name="Chalk A.M."/>
            <person name="Chiu K.P."/>
            <person name="Choudhary V."/>
            <person name="Christoffels A."/>
            <person name="Clutterbuck D.R."/>
            <person name="Crowe M.L."/>
            <person name="Dalla E."/>
            <person name="Dalrymple B.P."/>
            <person name="de Bono B."/>
            <person name="Della Gatta G."/>
            <person name="di Bernardo D."/>
            <person name="Down T."/>
            <person name="Engstrom P."/>
            <person name="Fagiolini M."/>
            <person name="Faulkner G."/>
            <person name="Fletcher C.F."/>
            <person name="Fukushima T."/>
            <person name="Furuno M."/>
            <person name="Futaki S."/>
            <person name="Gariboldi M."/>
            <person name="Georgii-Hemming P."/>
            <person name="Gingeras T.R."/>
            <person name="Gojobori T."/>
            <person name="Green R.E."/>
            <person name="Gustincich S."/>
            <person name="Harbers M."/>
            <person name="Hayashi Y."/>
            <person name="Hensch T.K."/>
            <person name="Hirokawa N."/>
            <person name="Hill D."/>
            <person name="Huminiecki L."/>
            <person name="Iacono M."/>
            <person name="Ikeo K."/>
            <person name="Iwama A."/>
            <person name="Ishikawa T."/>
            <person name="Jakt M."/>
            <person name="Kanapin A."/>
            <person name="Katoh M."/>
            <person name="Kawasawa Y."/>
            <person name="Kelso J."/>
            <person name="Kitamura H."/>
            <person name="Kitano H."/>
            <person name="Kollias G."/>
            <person name="Krishnan S.P."/>
            <person name="Kruger A."/>
            <person name="Kummerfeld S.K."/>
            <person name="Kurochkin I.V."/>
            <person name="Lareau L.F."/>
            <person name="Lazarevic D."/>
            <person name="Lipovich L."/>
            <person name="Liu J."/>
            <person name="Liuni S."/>
            <person name="McWilliam S."/>
            <person name="Madan Babu M."/>
            <person name="Madera M."/>
            <person name="Marchionni L."/>
            <person name="Matsuda H."/>
            <person name="Matsuzawa S."/>
            <person name="Miki H."/>
            <person name="Mignone F."/>
            <person name="Miyake S."/>
            <person name="Morris K."/>
            <person name="Mottagui-Tabar S."/>
            <person name="Mulder N."/>
            <person name="Nakano N."/>
            <person name="Nakauchi H."/>
            <person name="Ng P."/>
            <person name="Nilsson R."/>
            <person name="Nishiguchi S."/>
            <person name="Nishikawa S."/>
            <person name="Nori F."/>
            <person name="Ohara O."/>
            <person name="Okazaki Y."/>
            <person name="Orlando V."/>
            <person name="Pang K.C."/>
            <person name="Pavan W.J."/>
            <person name="Pavesi G."/>
            <person name="Pesole G."/>
            <person name="Petrovsky N."/>
            <person name="Piazza S."/>
            <person name="Reed J."/>
            <person name="Reid J.F."/>
            <person name="Ring B.Z."/>
            <person name="Ringwald M."/>
            <person name="Rost B."/>
            <person name="Ruan Y."/>
            <person name="Salzberg S.L."/>
            <person name="Sandelin A."/>
            <person name="Schneider C."/>
            <person name="Schoenbach C."/>
            <person name="Sekiguchi K."/>
            <person name="Semple C.A."/>
            <person name="Seno S."/>
            <person name="Sessa L."/>
            <person name="Sheng Y."/>
            <person name="Shibata Y."/>
            <person name="Shimada H."/>
            <person name="Shimada K."/>
            <person name="Silva D."/>
            <person name="Sinclair B."/>
            <person name="Sperling S."/>
            <person name="Stupka E."/>
            <person name="Sugiura K."/>
            <person name="Sultana R."/>
            <person name="Takenaka Y."/>
            <person name="Taki K."/>
            <person name="Tammoja K."/>
            <person name="Tan S.L."/>
            <person name="Tang S."/>
            <person name="Taylor M.S."/>
            <person name="Tegner J."/>
            <person name="Teichmann S.A."/>
            <person name="Ueda H.R."/>
            <person name="van Nimwegen E."/>
            <person name="Verardo R."/>
            <person name="Wei C.L."/>
            <person name="Yagi K."/>
            <person name="Yamanishi H."/>
            <person name="Zabarovsky E."/>
            <person name="Zhu S."/>
            <person name="Zimmer A."/>
            <person name="Hide W."/>
            <person name="Bult C."/>
            <person name="Grimmond S.M."/>
            <person name="Teasdale R.D."/>
            <person name="Liu E.T."/>
            <person name="Brusic V."/>
            <person name="Quackenbush J."/>
            <person name="Wahlestedt C."/>
            <person name="Mattick J.S."/>
            <person name="Hume D.A."/>
            <person name="Kai C."/>
            <person name="Sasaki D."/>
            <person name="Tomaru Y."/>
            <person name="Fukuda S."/>
            <person name="Kanamori-Katayama M."/>
            <person name="Suzuki M."/>
            <person name="Aoki J."/>
            <person name="Arakawa T."/>
            <person name="Iida J."/>
            <person name="Imamura K."/>
            <person name="Itoh M."/>
            <person name="Kato T."/>
            <person name="Kawaji H."/>
            <person name="Kawagashira N."/>
            <person name="Kawashima T."/>
            <person name="Kojima M."/>
            <person name="Kondo S."/>
            <person name="Konno H."/>
            <person name="Nakano K."/>
            <person name="Ninomiya N."/>
            <person name="Nishio T."/>
            <person name="Okada M."/>
            <person name="Plessy C."/>
            <person name="Shibata K."/>
            <person name="Shiraki T."/>
            <person name="Suzuki S."/>
            <person name="Tagami M."/>
            <person name="Waki K."/>
            <person name="Watahiki A."/>
            <person name="Okamura-Oho Y."/>
            <person name="Suzuki H."/>
            <person name="Kawai J."/>
            <person name="Hayashizaki Y."/>
        </authorList>
    </citation>
    <scope>NUCLEOTIDE SEQUENCE [LARGE SCALE MRNA]</scope>
    <source>
        <strain>C57BL/6J</strain>
        <tissue>Epididymis</tissue>
    </source>
</reference>
<reference key="2">
    <citation type="journal article" date="2009" name="PLoS Biol.">
        <title>Lineage-specific biology revealed by a finished genome assembly of the mouse.</title>
        <authorList>
            <person name="Church D.M."/>
            <person name="Goodstadt L."/>
            <person name="Hillier L.W."/>
            <person name="Zody M.C."/>
            <person name="Goldstein S."/>
            <person name="She X."/>
            <person name="Bult C.J."/>
            <person name="Agarwala R."/>
            <person name="Cherry J.L."/>
            <person name="DiCuccio M."/>
            <person name="Hlavina W."/>
            <person name="Kapustin Y."/>
            <person name="Meric P."/>
            <person name="Maglott D."/>
            <person name="Birtle Z."/>
            <person name="Marques A.C."/>
            <person name="Graves T."/>
            <person name="Zhou S."/>
            <person name="Teague B."/>
            <person name="Potamousis K."/>
            <person name="Churas C."/>
            <person name="Place M."/>
            <person name="Herschleb J."/>
            <person name="Runnheim R."/>
            <person name="Forrest D."/>
            <person name="Amos-Landgraf J."/>
            <person name="Schwartz D.C."/>
            <person name="Cheng Z."/>
            <person name="Lindblad-Toh K."/>
            <person name="Eichler E.E."/>
            <person name="Ponting C.P."/>
        </authorList>
    </citation>
    <scope>NUCLEOTIDE SEQUENCE [LARGE SCALE GENOMIC DNA]</scope>
    <source>
        <strain>C57BL/6J</strain>
    </source>
</reference>
<reference key="3">
    <citation type="journal article" date="2004" name="Genome Res.">
        <title>The status, quality, and expansion of the NIH full-length cDNA project: the Mammalian Gene Collection (MGC).</title>
        <authorList>
            <consortium name="The MGC Project Team"/>
        </authorList>
    </citation>
    <scope>NUCLEOTIDE SEQUENCE [LARGE SCALE MRNA]</scope>
    <source>
        <tissue>Brain</tissue>
    </source>
</reference>
<protein>
    <recommendedName>
        <fullName>Colipase-like protein 2</fullName>
    </recommendedName>
</protein>
<organism>
    <name type="scientific">Mus musculus</name>
    <name type="common">Mouse</name>
    <dbReference type="NCBI Taxonomy" id="10090"/>
    <lineage>
        <taxon>Eukaryota</taxon>
        <taxon>Metazoa</taxon>
        <taxon>Chordata</taxon>
        <taxon>Craniata</taxon>
        <taxon>Vertebrata</taxon>
        <taxon>Euteleostomi</taxon>
        <taxon>Mammalia</taxon>
        <taxon>Eutheria</taxon>
        <taxon>Euarchontoglires</taxon>
        <taxon>Glires</taxon>
        <taxon>Rodentia</taxon>
        <taxon>Myomorpha</taxon>
        <taxon>Muroidea</taxon>
        <taxon>Muridae</taxon>
        <taxon>Murinae</taxon>
        <taxon>Mus</taxon>
        <taxon>Mus</taxon>
    </lineage>
</organism>
<name>COLL2_MOUSE</name>
<accession>Q3UW21</accession>
<comment type="subcellular location">
    <subcellularLocation>
        <location evidence="3">Secreted</location>
    </subcellularLocation>
</comment>
<comment type="similarity">
    <text evidence="2">Belongs to the colipase family.</text>
</comment>
<proteinExistence type="inferred from homology"/>
<gene>
    <name type="primary">Clpsl2</name>
    <name type="synonym">Gm749</name>
</gene>